<organism>
    <name type="scientific">Homo sapiens</name>
    <name type="common">Human</name>
    <dbReference type="NCBI Taxonomy" id="9606"/>
    <lineage>
        <taxon>Eukaryota</taxon>
        <taxon>Metazoa</taxon>
        <taxon>Chordata</taxon>
        <taxon>Craniata</taxon>
        <taxon>Vertebrata</taxon>
        <taxon>Euteleostomi</taxon>
        <taxon>Mammalia</taxon>
        <taxon>Eutheria</taxon>
        <taxon>Euarchontoglires</taxon>
        <taxon>Primates</taxon>
        <taxon>Haplorrhini</taxon>
        <taxon>Catarrhini</taxon>
        <taxon>Hominidae</taxon>
        <taxon>Homo</taxon>
    </lineage>
</organism>
<protein>
    <recommendedName>
        <fullName>Proprotein convertase subtilisin/kexin type 6</fullName>
        <ecNumber>3.4.21.-</ecNumber>
    </recommendedName>
    <alternativeName>
        <fullName>Paired basic amino acid cleaving enzyme 4</fullName>
    </alternativeName>
    <alternativeName>
        <fullName>Subtilisin-like proprotein convertase 4</fullName>
        <shortName>SPC4</shortName>
    </alternativeName>
    <alternativeName>
        <fullName>Subtilisin/kexin-like protease PACE4</fullName>
    </alternativeName>
</protein>
<comment type="function">
    <text>Serine endoprotease that processes various proproteins by cleavage at paired basic amino acids, recognizing the RXXX[KR]R consensus motif. Likely functions in the constitutive secretory pathway, with unique restricted distribution in both neuroendocrine and non-neuroendocrine tissues.</text>
</comment>
<comment type="cofactor">
    <cofactor evidence="11">
        <name>Ca(2+)</name>
        <dbReference type="ChEBI" id="CHEBI:29108"/>
    </cofactor>
</comment>
<comment type="subunit">
    <text evidence="6">The PACE4A-I precursor protein seems to exist in the reticulum endoplasmic as both a monomer and a dimer-sized complex whereas mature PACE4A-I exists only as a monomer, suggesting that propeptide cleavage affects its tertiary or quaternary structure. Interacts (immature form including the propeptide) with RCN3; probably involved in the maturation and the secretion of PCSK6 (PubMed:16433634).</text>
</comment>
<comment type="interaction">
    <interactant intactId="EBI-2683528">
        <id>P29122</id>
    </interactant>
    <interactant intactId="EBI-11956269">
        <id>Q92824-2</id>
        <label>PCSK5</label>
    </interactant>
    <organismsDiffer>false</organismsDiffer>
    <experiments>3</experiments>
</comment>
<comment type="interaction">
    <interactant intactId="EBI-2683528">
        <id>P29122</id>
    </interactant>
    <interactant intactId="EBI-17216366">
        <id>Q8N8Z8</id>
        <label>ZNF441</label>
    </interactant>
    <organismsDiffer>false</organismsDiffer>
    <experiments>3</experiments>
</comment>
<comment type="subcellular location">
    <molecule>Isoform PACE4A-I</molecule>
    <subcellularLocation>
        <location>Secreted</location>
    </subcellularLocation>
</comment>
<comment type="subcellular location">
    <molecule>Isoform PACE4A-II</molecule>
    <subcellularLocation>
        <location>Secreted</location>
    </subcellularLocation>
</comment>
<comment type="subcellular location">
    <molecule>Isoform PACE4C</molecule>
    <subcellularLocation>
        <location>Endoplasmic reticulum</location>
    </subcellularLocation>
    <text>Not secreted, remains probably in zymogen form in endoplasmic reticulum.</text>
</comment>
<comment type="subcellular location">
    <molecule>Isoform PACE4CS</molecule>
    <subcellularLocation>
        <location>Endoplasmic reticulum</location>
    </subcellularLocation>
    <text>Not secreted, remains probably in zymogen form in endoplasmic reticulum.</text>
</comment>
<comment type="subcellular location">
    <molecule>Isoform PACE4E-I</molecule>
    <subcellularLocation>
        <location>Endomembrane system</location>
        <topology>Peripheral membrane protein</topology>
    </subcellularLocation>
    <text>Retained intracellularly probably through a hydrophobic cluster in their C-terminus.</text>
</comment>
<comment type="subcellular location">
    <molecule>Isoform PACE4E-II</molecule>
    <subcellularLocation>
        <location>Endomembrane system</location>
        <topology>Peripheral membrane protein</topology>
    </subcellularLocation>
    <text>Retained intracellularly probably through a hydrophobic cluster in their C-terminus.</text>
</comment>
<comment type="subcellular location">
    <molecule>Isoform PACE4B</molecule>
    <subcellularLocation>
        <location>Secreted</location>
    </subcellularLocation>
</comment>
<comment type="alternative products">
    <event type="alternative splicing"/>
    <isoform>
        <id>P29122-1</id>
        <name>PACE4A-I</name>
        <name>PACE4</name>
        <sequence type="displayed"/>
    </isoform>
    <isoform>
        <id>P29122-2</id>
        <name>PACE4A-II</name>
        <sequence type="described" ref="VSP_005436"/>
    </isoform>
    <isoform>
        <id>P29122-3</id>
        <name>PACE4B</name>
        <name>PACE4.1</name>
        <sequence type="described" ref="VSP_005428 VSP_005429"/>
    </isoform>
    <isoform>
        <id>P29122-4</id>
        <name>PACE4C</name>
        <sequence type="described" ref="VSP_005432 VSP_005433"/>
    </isoform>
    <isoform>
        <id>P29122-5</id>
        <name>PACE4CS</name>
        <sequence type="described" ref="VSP_005430 VSP_005431"/>
    </isoform>
    <isoform>
        <id>P29122-6</id>
        <name>PACE4D</name>
        <sequence type="described" ref="VSP_005427 VSP_005434 VSP_005435"/>
    </isoform>
    <isoform>
        <id>P29122-7</id>
        <name>PACE4E-I</name>
        <sequence type="described" ref="VSP_005437"/>
    </isoform>
    <isoform>
        <id>P29122-8</id>
        <name>PACE4E-II</name>
        <sequence type="described" ref="VSP_005436 VSP_005437"/>
    </isoform>
</comment>
<comment type="tissue specificity">
    <text>Each PACE4 isoform exhibits a unique restricted distribution. Isoform PACE4A-I is expressed in heart, brain, placenta, lung, skeletal muscle, kidney, pancreas, but at comparatively higher levels in the liver. Isoform PACE4A-II is at least expressed in placenta. Isoform PACE4B was only found in the embryonic kidney cell line from which it was isolated. Isoform PACE4C and isoform PACE4D are expressed in placenta. Isoform PACE4E-I is expressed in cerebellum, placenta and pituitary. Isoform PACE4E-II is at least present in cerebellum.</text>
</comment>
<comment type="domain">
    <text>The propeptide domain acts as an intramolecular chaperone assisting the folding of the zymogen within the endoplasmic reticulum. Isoform PACE4D lacks the propeptide domain.</text>
</comment>
<comment type="miscellaneous">
    <molecule>Isoform PACE4B</molecule>
    <text evidence="11">Probably enzymatically inactive.</text>
</comment>
<comment type="miscellaneous">
    <molecule>Isoform PACE4C</molecule>
    <text evidence="11">Probably enzymatically inactive.</text>
</comment>
<comment type="miscellaneous">
    <molecule>Isoform PACE4CS</molecule>
    <text evidence="11">Probably enzymatically inactive.</text>
</comment>
<comment type="miscellaneous">
    <molecule>Isoform PACE4D</molecule>
    <text evidence="11">Probably enzymatically inactive.</text>
</comment>
<comment type="similarity">
    <text evidence="11">Belongs to the peptidase S8 family.</text>
</comment>
<gene>
    <name type="primary">PCSK6</name>
    <name type="synonym">PACE4</name>
</gene>
<feature type="signal peptide" evidence="1">
    <location>
        <begin position="1"/>
        <end position="63"/>
    </location>
</feature>
<feature type="propeptide" id="PRO_0000027110" evidence="7">
    <location>
        <begin position="64"/>
        <end position="149"/>
    </location>
</feature>
<feature type="chain" id="PRO_0000027111" description="Proprotein convertase subtilisin/kexin type 6">
    <location>
        <begin position="150"/>
        <end position="969"/>
    </location>
</feature>
<feature type="domain" description="Peptidase S8" evidence="4">
    <location>
        <begin position="168"/>
        <end position="487"/>
    </location>
</feature>
<feature type="domain" description="P/Homo B" evidence="3">
    <location>
        <begin position="495"/>
        <end position="635"/>
    </location>
</feature>
<feature type="repeat" description="FU 1">
    <location>
        <begin position="692"/>
        <end position="739"/>
    </location>
</feature>
<feature type="repeat" description="FU 2">
    <location>
        <begin position="743"/>
        <end position="790"/>
    </location>
</feature>
<feature type="repeat" description="FU 3">
    <location>
        <begin position="794"/>
        <end position="838"/>
    </location>
</feature>
<feature type="repeat" description="FU 4">
    <location>
        <begin position="842"/>
        <end position="887"/>
    </location>
</feature>
<feature type="repeat" description="FU 5">
    <location>
        <begin position="895"/>
        <end position="943"/>
    </location>
</feature>
<feature type="domain" description="PLAC" evidence="2">
    <location>
        <begin position="931"/>
        <end position="969"/>
    </location>
</feature>
<feature type="region of interest" description="Disordered" evidence="5">
    <location>
        <begin position="1"/>
        <end position="39"/>
    </location>
</feature>
<feature type="region of interest" description="Disordered" evidence="5">
    <location>
        <begin position="658"/>
        <end position="683"/>
    </location>
</feature>
<feature type="region of interest" description="CRM (Cys-rich motif)">
    <location>
        <begin position="695"/>
        <end position="930"/>
    </location>
</feature>
<feature type="short sequence motif" description="Cell attachment site" evidence="1">
    <location>
        <begin position="553"/>
        <end position="555"/>
    </location>
</feature>
<feature type="compositionally biased region" description="Pro residues" evidence="5">
    <location>
        <begin position="1"/>
        <end position="16"/>
    </location>
</feature>
<feature type="compositionally biased region" description="Gly residues" evidence="5">
    <location>
        <begin position="26"/>
        <end position="39"/>
    </location>
</feature>
<feature type="active site" description="Charge relay system" evidence="4">
    <location>
        <position position="205"/>
    </location>
</feature>
<feature type="active site" description="Charge relay system" evidence="4">
    <location>
        <position position="246"/>
    </location>
</feature>
<feature type="active site" description="Charge relay system" evidence="4">
    <location>
        <position position="420"/>
    </location>
</feature>
<feature type="site" description="Cleavage; by autolysis" evidence="7">
    <location>
        <begin position="149"/>
        <end position="150"/>
    </location>
</feature>
<feature type="glycosylation site" description="N-linked (GlcNAc...) asparagine" evidence="1">
    <location>
        <position position="259"/>
    </location>
</feature>
<feature type="glycosylation site" description="N-linked (GlcNAc...) asparagine" evidence="1">
    <location>
        <position position="914"/>
    </location>
</feature>
<feature type="glycosylation site" description="N-linked (GlcNAc...) asparagine" evidence="1">
    <location>
        <position position="932"/>
    </location>
</feature>
<feature type="splice variant" id="VSP_005427" description="In isoform PACE4D." evidence="9">
    <location>
        <begin position="1"/>
        <end position="167"/>
    </location>
</feature>
<feature type="splice variant" id="VSP_005428" description="In isoform PACE4B." evidence="8">
    <original>K</original>
    <variation>KGAAVAFWWTIGWPWNV</variation>
    <location>
        <position position="471"/>
    </location>
</feature>
<feature type="splice variant" id="VSP_005429" description="In isoform PACE4B." evidence="8">
    <location>
        <begin position="472"/>
        <end position="969"/>
    </location>
</feature>
<feature type="splice variant" id="VSP_005434" description="In isoform PACE4D." evidence="9">
    <original>KLKEWSLILYGTAEHPYHTFSAHQSRSRMLELSAPELEPPKAAL</original>
    <variation>DLETPVANQLTTEERFVSTPSILFHWSVYLSWSQYHIVLITVAL</variation>
    <location>
        <begin position="621"/>
        <end position="664"/>
    </location>
</feature>
<feature type="splice variant" id="VSP_005432" description="In isoform PACE4C." evidence="9">
    <original>KLKEWSLILYGTAEHPYHTFSAHQSRSRMLEL</original>
    <variation>DLETPVANQLTTEEREPGLKHVFRWQIEQELW</variation>
    <location>
        <begin position="621"/>
        <end position="652"/>
    </location>
</feature>
<feature type="splice variant" id="VSP_005430" description="In isoform PACE4CS." evidence="11">
    <original>KLK</original>
    <variation>NLD</variation>
    <location>
        <begin position="621"/>
        <end position="623"/>
    </location>
</feature>
<feature type="splice variant" id="VSP_005431" description="In isoform PACE4CS." evidence="11">
    <location>
        <begin position="624"/>
        <end position="969"/>
    </location>
</feature>
<feature type="splice variant" id="VSP_005433" description="In isoform PACE4C." evidence="9">
    <location>
        <begin position="653"/>
        <end position="969"/>
    </location>
</feature>
<feature type="splice variant" id="VSP_005435" description="In isoform PACE4D." evidence="9">
    <location>
        <begin position="665"/>
        <end position="969"/>
    </location>
</feature>
<feature type="splice variant" id="VSP_005436" description="In isoform PACE4A-II and isoform PACE4E-II." evidence="10">
    <original>AQSTPGSANILQTS</original>
    <variation>G</variation>
    <location>
        <begin position="680"/>
        <end position="693"/>
    </location>
</feature>
<feature type="splice variant" id="VSP_005437" description="In isoform PACE4E-I and isoform PACE4E-II." evidence="10">
    <original>CDENCLSCAGSSRNCSRCKTGFTQLGTSCITNHTCSNADETFCEMVKSNRLCERKLFIQFCCRTCLLAG</original>
    <variation>YGPPGGERQATVSSKGVPGGQSLSASSPGAGEGMLHHPTVDRSPFTELLRGLRPFVHWMHICWVPAVGRHRAAAG</variation>
    <location>
        <begin position="901"/>
        <end position="969"/>
    </location>
</feature>
<feature type="sequence variant" id="VAR_051824" description="In dbSNP:rs1058260.">
    <original>C</original>
    <variation>R</variation>
    <location>
        <position position="502"/>
    </location>
</feature>
<feature type="sequence conflict" description="In Ref. 6; BAA21624/BAA21625/BAA21626/BAA21627." evidence="11" ref="6">
    <original>T</original>
    <variation>I</variation>
    <location>
        <position position="639"/>
    </location>
</feature>
<sequence>MPPRAPPAPGPRPPPRAAAATDTAAGAGGAGGAGGAGGPGFRPLAPRPWRWLLLLALPAACSAPPPRPVYTNHWAVQVLGGPAEADRVAAAHGYLNLGQIGNLEDYYHFYHSKTFKRSTLSSRGPHTFLRMDPQVKWLQQQEVKRRVKRQVRSDPQALYFNDPIWSNMWYLHCGDKNSRCRSEMNVQAAWKRGYTGKNVVVTILDDGIERNHPDLAPNYDSYASYDVNGNDYDPSPRYDASNENKHGTRCAGEVAASANNSYCIVGIAYNAKIGGIRMLDGDVTDVVEAKSLGIRPNYIDIYSASWGPDDDGKTVDGPGRLAKQAFEYGIKKGRQGLGSIFVWASGNGGREGDYCSCDGYTNSIYTISVSSATENGYKPWYLEECASTLATTYSSGAFYERKIVTTDLRQRCTDGHTGTSVSAPMVAGIIALALEANSQLTWRDVQHLLVKTSRPAHLKASDWKVNGAGHKVSHFYGFGLVDAEALVVEAKKWTAVPSQHMCVAASDKRPRSIPLVQVLRTTALTSACAEHSDQRVVYLEHVVVRTSISHPRRGDLQIYLVSPSGTKSQLLAKRLLDLSNEGFTNWEFMTVHCWGEKAEGQWTLEIQDLPSQVRNPEKQGKLKEWSLILYGTAEHPYHTFSAHQSRSRMLELSAPELEPPKAALSPSQVEVPEDEEDYTAQSTPGSANILQTSVCHPECGDKGCDGPNADQCLNCVHFSLGSVKTSRKCVSVCPLGYFGDTAARRCRRCHKGCETCSSRAATQCLSCRRGFYHHQEMNTCVTLCPAGFYADESQKNCLKCHPSCKKCVDEPEKCTVCKEGFSLARGSCIPDCEPGTYFDSELIRCGECHHTCGTCVGPGREECIHCAKNFHFHDWKCVPACGEGFYPEEMPGLPHKVCRRCDENCLSCAGSSRNCSRCKTGFTQLGTSCITNHTCSNADETFCEMVKSNRLCERKLFIQFCCRTCLLAG</sequence>
<evidence type="ECO:0000255" key="1"/>
<evidence type="ECO:0000255" key="2">
    <source>
        <dbReference type="PROSITE-ProRule" id="PRU00233"/>
    </source>
</evidence>
<evidence type="ECO:0000255" key="3">
    <source>
        <dbReference type="PROSITE-ProRule" id="PRU01173"/>
    </source>
</evidence>
<evidence type="ECO:0000255" key="4">
    <source>
        <dbReference type="PROSITE-ProRule" id="PRU01240"/>
    </source>
</evidence>
<evidence type="ECO:0000256" key="5">
    <source>
        <dbReference type="SAM" id="MobiDB-lite"/>
    </source>
</evidence>
<evidence type="ECO:0000269" key="6">
    <source>
    </source>
</evidence>
<evidence type="ECO:0000269" key="7">
    <source>
    </source>
</evidence>
<evidence type="ECO:0000303" key="8">
    <source>
    </source>
</evidence>
<evidence type="ECO:0000303" key="9">
    <source>
    </source>
</evidence>
<evidence type="ECO:0000303" key="10">
    <source>
    </source>
</evidence>
<evidence type="ECO:0000305" key="11"/>
<reference key="1">
    <citation type="journal article" date="1991" name="DNA Cell Biol.">
        <title>Identification of a second human subtilisin-like protease gene in the fes/fps region of chromosome 15.</title>
        <authorList>
            <person name="Kiefer M.C."/>
            <person name="Tucker J.E."/>
            <person name="Joh R."/>
            <person name="Landsberg K.E."/>
            <person name="Saltman D."/>
            <person name="Barr P.J."/>
        </authorList>
    </citation>
    <scope>NUCLEOTIDE SEQUENCE [MRNA] (ISOFORMS PACE4A-I AND PACE4B)</scope>
    <source>
        <tissue>Hepatoma</tissue>
        <tissue>Kidney</tissue>
    </source>
</reference>
<reference key="2">
    <citation type="journal article" date="1994" name="Biochem. Biophys. Res. Commun.">
        <title>Identification of novel cDNAs encoding human kexin-like protease, PACE4 isoforms.</title>
        <authorList>
            <person name="Tsuji A."/>
            <person name="Higashine K."/>
            <person name="Hine C."/>
            <person name="Mori K."/>
            <person name="Tamai Y."/>
            <person name="Nagamune H."/>
            <person name="Matsuda Y."/>
        </authorList>
    </citation>
    <scope>NUCLEOTIDE SEQUENCE [MRNA] (ISOFORMS PACE4C AND PACE4D)</scope>
    <source>
        <tissue>Placenta</tissue>
    </source>
</reference>
<reference key="3">
    <citation type="journal article" date="1994" name="Biochem. Biophys. Res. Commun.">
        <authorList>
            <person name="Tsuji A."/>
            <person name="Higashine K."/>
            <person name="Hine C."/>
            <person name="Mori K."/>
            <person name="Tamai Y."/>
            <person name="Nagamune H."/>
            <person name="Matsuda Y."/>
        </authorList>
    </citation>
    <scope>ERRATUM OF PUBMED:8179631</scope>
</reference>
<reference key="4">
    <citation type="submission" date="1996-09" db="EMBL/GenBank/DDBJ databases">
        <title>Identification of a novel PACE4 isoform, PACE4E.</title>
        <authorList>
            <person name="Mori K."/>
            <person name="Imamaki A."/>
            <person name="Kii S."/>
            <person name="Nagamune H."/>
            <person name="Nagahama M."/>
            <person name="Tsuji A."/>
            <person name="Matsuda Y."/>
        </authorList>
    </citation>
    <scope>NUCLEOTIDE SEQUENCE (ISOFORM PACE4A-II)</scope>
    <source>
        <tissue>Placenta</tissue>
    </source>
</reference>
<reference key="5">
    <citation type="journal article" date="1997" name="J. Biochem.">
        <title>A novel human PACE4 isoform, PACE4E is an active processing protease containing a hydrophobic cluster at the carboxy terminus.</title>
        <authorList>
            <person name="Mori K."/>
            <person name="Kii S."/>
            <person name="Tsuji A."/>
            <person name="Nagahama M."/>
            <person name="Imamaki A."/>
            <person name="Hayashi K."/>
            <person name="Akamatsu T."/>
            <person name="Nagamune H."/>
            <person name="Matsuda Y."/>
        </authorList>
    </citation>
    <scope>NUCLEOTIDE SEQUENCE [MRNA] (ISOFORMS PACE4E-I AND PACE4E-II)</scope>
    <source>
        <tissue>Cerebellum</tissue>
    </source>
</reference>
<reference key="6">
    <citation type="journal article" date="1997" name="J. Biochem.">
        <title>Genomic organization and alternative splicing of human PACE4 (SPC4), kexin-like processing endoprotease.</title>
        <authorList>
            <person name="Tsuji A."/>
            <person name="Hine C."/>
            <person name="Tamai Y."/>
            <person name="Yonemoto K."/>
            <person name="Mori K."/>
            <person name="Yoshida S."/>
            <person name="Bando M."/>
            <person name="Sakai E."/>
            <person name="Mori K."/>
            <person name="Akamatsu T."/>
            <person name="Matsuda Y."/>
        </authorList>
    </citation>
    <scope>NUCLEOTIDE SEQUENCE [GENOMIC DNA] (ISOFORMS PACE4A-I; PACE4A-II; PACE4CS; PACE4D; PACE4E-I AND PACE4E-II)</scope>
</reference>
<reference key="7">
    <citation type="journal article" date="1996" name="FEBS Lett.">
        <title>Functional analysis of human PACE4-A and PACE4-C isoforms: identification of a new PACE4-CS isoform.</title>
        <authorList>
            <person name="Zhong M."/>
            <person name="Benjannet S."/>
            <person name="Lazure C."/>
            <person name="Munzer S."/>
            <person name="Seidah N.G."/>
        </authorList>
    </citation>
    <scope>ALTERNATIVE SPLICING (ISOFORM PACE4CS)</scope>
</reference>
<reference key="8">
    <citation type="journal article" date="1999" name="Biochem. J.">
        <title>Endoprotease PACE4 is Ca2+-dependent and temperature-sensitive and can partly rescue the phenotype of a furin-deficient cell strain.</title>
        <authorList>
            <person name="Sucic J.F."/>
            <person name="Moehring J.M."/>
            <person name="Inocencio N.M."/>
            <person name="Luchini J.W."/>
            <person name="Moehring T.J."/>
        </authorList>
    </citation>
    <scope>CHARACTERIZATION</scope>
</reference>
<reference key="9">
    <citation type="journal article" date="1998" name="FEBS Lett.">
        <title>Biosynthetic processing and quaternary interactions of proprotein convertase SPC4 (PACE4).</title>
        <authorList>
            <person name="Nagahama M."/>
            <person name="Taniguchi T."/>
            <person name="Hashimoto E."/>
            <person name="Imamaki A."/>
            <person name="Mori K."/>
            <person name="Tsuji A."/>
            <person name="Matsuda Y."/>
        </authorList>
    </citation>
    <scope>PROTEOLYTIC PROCESSING</scope>
</reference>
<reference key="10">
    <citation type="journal article" date="2006" name="Biochem. J.">
        <title>A proteomic approach reveals transient association of reticulocalbin-3, a novel member of the CREC family, with the precursor of subtilisin-like proprotein convertase, PACE4.</title>
        <authorList>
            <person name="Tsuji A."/>
            <person name="Kikuchi Y."/>
            <person name="Sato Y."/>
            <person name="Koide S."/>
            <person name="Yuasa K."/>
            <person name="Nagahama M."/>
            <person name="Matsuda Y."/>
        </authorList>
    </citation>
    <scope>INTERACTION WITH RCN3</scope>
</reference>
<keyword id="KW-0025">Alternative splicing</keyword>
<keyword id="KW-0106">Calcium</keyword>
<keyword id="KW-0165">Cleavage on pair of basic residues</keyword>
<keyword id="KW-0256">Endoplasmic reticulum</keyword>
<keyword id="KW-0325">Glycoprotein</keyword>
<keyword id="KW-0378">Hydrolase</keyword>
<keyword id="KW-0472">Membrane</keyword>
<keyword id="KW-0645">Protease</keyword>
<keyword id="KW-1267">Proteomics identification</keyword>
<keyword id="KW-1185">Reference proteome</keyword>
<keyword id="KW-0677">Repeat</keyword>
<keyword id="KW-0964">Secreted</keyword>
<keyword id="KW-0720">Serine protease</keyword>
<keyword id="KW-0732">Signal</keyword>
<keyword id="KW-0865">Zymogen</keyword>
<proteinExistence type="evidence at protein level"/>
<dbReference type="EC" id="3.4.21.-"/>
<dbReference type="EMBL" id="M80482">
    <property type="protein sequence ID" value="AAA59998.1"/>
    <property type="molecule type" value="mRNA"/>
</dbReference>
<dbReference type="EMBL" id="AB001914">
    <property type="protein sequence ID" value="BAA21620.1"/>
    <property type="molecule type" value="Genomic_DNA"/>
</dbReference>
<dbReference type="EMBL" id="AB001914">
    <property type="protein sequence ID" value="BAA21621.1"/>
    <property type="molecule type" value="Genomic_DNA"/>
</dbReference>
<dbReference type="EMBL" id="AB001914">
    <property type="protein sequence ID" value="BAA21622.1"/>
    <property type="molecule type" value="Genomic_DNA"/>
</dbReference>
<dbReference type="EMBL" id="AB001914">
    <property type="protein sequence ID" value="BAA21623.1"/>
    <property type="molecule type" value="Genomic_DNA"/>
</dbReference>
<dbReference type="EMBL" id="AB001914">
    <property type="protein sequence ID" value="BAA21624.1"/>
    <property type="molecule type" value="Genomic_DNA"/>
</dbReference>
<dbReference type="EMBL" id="AB001914">
    <property type="protein sequence ID" value="BAA21625.1"/>
    <property type="molecule type" value="Genomic_DNA"/>
</dbReference>
<dbReference type="EMBL" id="AB001914">
    <property type="protein sequence ID" value="BAA21626.1"/>
    <property type="molecule type" value="Genomic_DNA"/>
</dbReference>
<dbReference type="EMBL" id="AB001914">
    <property type="protein sequence ID" value="BAA21627.1"/>
    <property type="molecule type" value="Genomic_DNA"/>
</dbReference>
<dbReference type="EMBL" id="D28513">
    <property type="protein sequence ID" value="BAA05871.1"/>
    <property type="molecule type" value="mRNA"/>
</dbReference>
<dbReference type="EMBL" id="D28514">
    <property type="protein sequence ID" value="BAA05872.1"/>
    <property type="molecule type" value="mRNA"/>
</dbReference>
<dbReference type="EMBL" id="D87995">
    <property type="protein sequence ID" value="BAA21793.1"/>
    <property type="molecule type" value="mRNA"/>
</dbReference>
<dbReference type="EMBL" id="D87993">
    <property type="protein sequence ID" value="BAA21791.1"/>
    <property type="molecule type" value="mRNA"/>
</dbReference>
<dbReference type="EMBL" id="D87994">
    <property type="protein sequence ID" value="BAA21792.1"/>
    <property type="molecule type" value="mRNA"/>
</dbReference>
<dbReference type="CCDS" id="CCDS73789.1">
    <molecule id="P29122-2"/>
</dbReference>
<dbReference type="CCDS" id="CCDS73790.1">
    <molecule id="P29122-1"/>
</dbReference>
<dbReference type="CCDS" id="CCDS73791.1">
    <molecule id="P29122-5"/>
</dbReference>
<dbReference type="CCDS" id="CCDS73793.1">
    <molecule id="P29122-4"/>
</dbReference>
<dbReference type="PIR" id="A39490">
    <property type="entry name" value="A39490"/>
</dbReference>
<dbReference type="PIR" id="B39490">
    <property type="entry name" value="B39490"/>
</dbReference>
<dbReference type="PIR" id="JC2191">
    <property type="entry name" value="JC2191"/>
</dbReference>
<dbReference type="PIR" id="JC2192">
    <property type="entry name" value="JC2192"/>
</dbReference>
<dbReference type="PIR" id="JC5570">
    <property type="entry name" value="JC5570"/>
</dbReference>
<dbReference type="PIR" id="JC5571">
    <property type="entry name" value="JC5571"/>
</dbReference>
<dbReference type="RefSeq" id="NP_001278238.1">
    <property type="nucleotide sequence ID" value="NM_001291309.1"/>
</dbReference>
<dbReference type="RefSeq" id="NP_002561.1">
    <molecule id="P29122-1"/>
    <property type="nucleotide sequence ID" value="NM_002570.5"/>
</dbReference>
<dbReference type="RefSeq" id="NP_612192.1">
    <molecule id="P29122-2"/>
    <property type="nucleotide sequence ID" value="NM_138319.4"/>
</dbReference>
<dbReference type="RefSeq" id="NP_612195.1">
    <molecule id="P29122-3"/>
    <property type="nucleotide sequence ID" value="NM_138322.4"/>
</dbReference>
<dbReference type="RefSeq" id="NP_612196.1">
    <molecule id="P29122-5"/>
    <property type="nucleotide sequence ID" value="NM_138323.3"/>
</dbReference>
<dbReference type="RefSeq" id="NP_612197.1">
    <molecule id="P29122-4"/>
    <property type="nucleotide sequence ID" value="NM_138324.3"/>
</dbReference>
<dbReference type="RefSeq" id="NP_612198.2">
    <property type="nucleotide sequence ID" value="NM_138325.3"/>
</dbReference>
<dbReference type="SMR" id="P29122"/>
<dbReference type="BioGRID" id="111083">
    <property type="interactions" value="121"/>
</dbReference>
<dbReference type="DIP" id="DIP-29903N"/>
<dbReference type="FunCoup" id="P29122">
    <property type="interactions" value="334"/>
</dbReference>
<dbReference type="IntAct" id="P29122">
    <property type="interactions" value="49"/>
</dbReference>
<dbReference type="MINT" id="P29122"/>
<dbReference type="STRING" id="9606.ENSP00000482760"/>
<dbReference type="BindingDB" id="P29122"/>
<dbReference type="ChEMBL" id="CHEMBL2951"/>
<dbReference type="GuidetoPHARMACOLOGY" id="2386"/>
<dbReference type="MEROPS" id="S08.075"/>
<dbReference type="GlyCosmos" id="P29122">
    <property type="glycosylation" value="4 sites, 1 glycan"/>
</dbReference>
<dbReference type="GlyGen" id="P29122">
    <property type="glycosylation" value="4 sites, 1 N-linked glycan (2 sites), 1 O-linked glycan (1 site)"/>
</dbReference>
<dbReference type="iPTMnet" id="P29122"/>
<dbReference type="PhosphoSitePlus" id="P29122"/>
<dbReference type="BioMuta" id="PCSK6"/>
<dbReference type="DMDM" id="129542"/>
<dbReference type="jPOST" id="P29122"/>
<dbReference type="MassIVE" id="P29122"/>
<dbReference type="PaxDb" id="9606-ENSP00000482760"/>
<dbReference type="PeptideAtlas" id="P29122"/>
<dbReference type="ProteomicsDB" id="54520">
    <molecule id="P29122-1"/>
</dbReference>
<dbReference type="ProteomicsDB" id="54521">
    <molecule id="P29122-2"/>
</dbReference>
<dbReference type="ProteomicsDB" id="54522">
    <molecule id="P29122-3"/>
</dbReference>
<dbReference type="ProteomicsDB" id="54523">
    <molecule id="P29122-4"/>
</dbReference>
<dbReference type="ProteomicsDB" id="54524">
    <molecule id="P29122-5"/>
</dbReference>
<dbReference type="ProteomicsDB" id="54525">
    <molecule id="P29122-6"/>
</dbReference>
<dbReference type="ProteomicsDB" id="54526">
    <molecule id="P29122-7"/>
</dbReference>
<dbReference type="ProteomicsDB" id="54527">
    <molecule id="P29122-8"/>
</dbReference>
<dbReference type="Pumba" id="P29122"/>
<dbReference type="TopDownProteomics" id="P29122-3">
    <molecule id="P29122-3"/>
</dbReference>
<dbReference type="Antibodypedia" id="1024">
    <property type="antibodies" value="305 antibodies from 31 providers"/>
</dbReference>
<dbReference type="DNASU" id="5046"/>
<dbReference type="Ensembl" id="ENST00000611716.5">
    <molecule id="P29122-1"/>
    <property type="protein sequence ID" value="ENSP00000482760.1"/>
    <property type="gene ID" value="ENSG00000140479.18"/>
</dbReference>
<dbReference type="Ensembl" id="ENST00000611967.4">
    <molecule id="P29122-4"/>
    <property type="protein sequence ID" value="ENSP00000477768.1"/>
    <property type="gene ID" value="ENSG00000140479.18"/>
</dbReference>
<dbReference type="Ensembl" id="ENST00000615296.4">
    <molecule id="P29122-5"/>
    <property type="protein sequence ID" value="ENSP00000478081.1"/>
    <property type="gene ID" value="ENSG00000140479.18"/>
</dbReference>
<dbReference type="Ensembl" id="ENST00000618548.4">
    <molecule id="P29122-2"/>
    <property type="protein sequence ID" value="ENSP00000479496.1"/>
    <property type="gene ID" value="ENSG00000140479.18"/>
</dbReference>
<dbReference type="GeneID" id="5046"/>
<dbReference type="KEGG" id="hsa:5046"/>
<dbReference type="MANE-Select" id="ENST00000611716.5">
    <property type="protein sequence ID" value="ENSP00000482760.1"/>
    <property type="RefSeq nucleotide sequence ID" value="NM_002570.5"/>
    <property type="RefSeq protein sequence ID" value="NP_002561.1"/>
</dbReference>
<dbReference type="UCSC" id="uc032csi.2">
    <molecule id="P29122-1"/>
    <property type="organism name" value="human"/>
</dbReference>
<dbReference type="AGR" id="HGNC:8569"/>
<dbReference type="CTD" id="5046"/>
<dbReference type="DisGeNET" id="5046"/>
<dbReference type="GeneCards" id="PCSK6"/>
<dbReference type="HGNC" id="HGNC:8569">
    <property type="gene designation" value="PCSK6"/>
</dbReference>
<dbReference type="HPA" id="ENSG00000140479">
    <property type="expression patterns" value="Tissue enhanced (brain, liver, lymphoid tissue)"/>
</dbReference>
<dbReference type="MIM" id="167405">
    <property type="type" value="gene"/>
</dbReference>
<dbReference type="neXtProt" id="NX_P29122"/>
<dbReference type="OpenTargets" id="ENSG00000140479"/>
<dbReference type="PharmGKB" id="PA32895"/>
<dbReference type="VEuPathDB" id="HostDB:ENSG00000140479"/>
<dbReference type="eggNOG" id="KOG3525">
    <property type="taxonomic scope" value="Eukaryota"/>
</dbReference>
<dbReference type="GeneTree" id="ENSGT00940000159506"/>
<dbReference type="HOGENOM" id="CLU_002976_4_1_1"/>
<dbReference type="InParanoid" id="P29122"/>
<dbReference type="OMA" id="TWYNDTW"/>
<dbReference type="OrthoDB" id="300641at2759"/>
<dbReference type="PAN-GO" id="P29122">
    <property type="GO annotations" value="6 GO annotations based on evolutionary models"/>
</dbReference>
<dbReference type="PhylomeDB" id="P29122"/>
<dbReference type="TreeFam" id="TF314277"/>
<dbReference type="BRENDA" id="3.4.21.61">
    <property type="organism ID" value="2681"/>
</dbReference>
<dbReference type="BRENDA" id="3.4.21.B25">
    <property type="organism ID" value="2681"/>
</dbReference>
<dbReference type="PathwayCommons" id="P29122"/>
<dbReference type="Reactome" id="R-HSA-1181150">
    <property type="pathway name" value="Signaling by NODAL"/>
</dbReference>
<dbReference type="Reactome" id="R-HSA-167060">
    <property type="pathway name" value="NGF processing"/>
</dbReference>
<dbReference type="Reactome" id="R-HSA-6809371">
    <property type="pathway name" value="Formation of the cornified envelope"/>
</dbReference>
<dbReference type="Reactome" id="R-HSA-8963889">
    <property type="pathway name" value="Assembly of active LPL and LIPC lipase complexes"/>
</dbReference>
<dbReference type="SignaLink" id="P29122"/>
<dbReference type="SIGNOR" id="P29122"/>
<dbReference type="BioGRID-ORCS" id="5046">
    <property type="hits" value="10 hits in 329 CRISPR screens"/>
</dbReference>
<dbReference type="ChiTaRS" id="PCSK6">
    <property type="organism name" value="human"/>
</dbReference>
<dbReference type="GeneWiki" id="PCSK6"/>
<dbReference type="GenomeRNAi" id="5046"/>
<dbReference type="Pharos" id="P29122">
    <property type="development level" value="Tchem"/>
</dbReference>
<dbReference type="PRO" id="PR:P29122"/>
<dbReference type="Proteomes" id="UP000005640">
    <property type="component" value="Chromosome 15"/>
</dbReference>
<dbReference type="RNAct" id="P29122">
    <property type="molecule type" value="protein"/>
</dbReference>
<dbReference type="Bgee" id="ENSG00000140479">
    <property type="expression patterns" value="Expressed in C1 segment of cervical spinal cord and 180 other cell types or tissues"/>
</dbReference>
<dbReference type="ExpressionAtlas" id="P29122">
    <property type="expression patterns" value="baseline and differential"/>
</dbReference>
<dbReference type="GO" id="GO:0009986">
    <property type="term" value="C:cell surface"/>
    <property type="evidence" value="ECO:0000314"/>
    <property type="project" value="BHF-UCL"/>
</dbReference>
<dbReference type="GO" id="GO:0062023">
    <property type="term" value="C:collagen-containing extracellular matrix"/>
    <property type="evidence" value="ECO:0000314"/>
    <property type="project" value="BHF-UCL"/>
</dbReference>
<dbReference type="GO" id="GO:0005783">
    <property type="term" value="C:endoplasmic reticulum"/>
    <property type="evidence" value="ECO:0007669"/>
    <property type="project" value="UniProtKB-SubCell"/>
</dbReference>
<dbReference type="GO" id="GO:0005576">
    <property type="term" value="C:extracellular region"/>
    <property type="evidence" value="ECO:0000304"/>
    <property type="project" value="Reactome"/>
</dbReference>
<dbReference type="GO" id="GO:0005615">
    <property type="term" value="C:extracellular space"/>
    <property type="evidence" value="ECO:0000314"/>
    <property type="project" value="BHF-UCL"/>
</dbReference>
<dbReference type="GO" id="GO:0005796">
    <property type="term" value="C:Golgi lumen"/>
    <property type="evidence" value="ECO:0000304"/>
    <property type="project" value="Reactome"/>
</dbReference>
<dbReference type="GO" id="GO:0016020">
    <property type="term" value="C:membrane"/>
    <property type="evidence" value="ECO:0000318"/>
    <property type="project" value="GO_Central"/>
</dbReference>
<dbReference type="GO" id="GO:0005886">
    <property type="term" value="C:plasma membrane"/>
    <property type="evidence" value="ECO:0000304"/>
    <property type="project" value="Reactome"/>
</dbReference>
<dbReference type="GO" id="GO:0004175">
    <property type="term" value="F:endopeptidase activity"/>
    <property type="evidence" value="ECO:0000314"/>
    <property type="project" value="BHF-UCL"/>
</dbReference>
<dbReference type="GO" id="GO:0008201">
    <property type="term" value="F:heparin binding"/>
    <property type="evidence" value="ECO:0000314"/>
    <property type="project" value="BHF-UCL"/>
</dbReference>
<dbReference type="GO" id="GO:0048406">
    <property type="term" value="F:nerve growth factor binding"/>
    <property type="evidence" value="ECO:0000314"/>
    <property type="project" value="BHF-UCL"/>
</dbReference>
<dbReference type="GO" id="GO:0004252">
    <property type="term" value="F:serine-type endopeptidase activity"/>
    <property type="evidence" value="ECO:0000314"/>
    <property type="project" value="BHF-UCL"/>
</dbReference>
<dbReference type="GO" id="GO:0007368">
    <property type="term" value="P:determination of left/right symmetry"/>
    <property type="evidence" value="ECO:0007669"/>
    <property type="project" value="Ensembl"/>
</dbReference>
<dbReference type="GO" id="GO:0009100">
    <property type="term" value="P:glycoprotein metabolic process"/>
    <property type="evidence" value="ECO:0000314"/>
    <property type="project" value="BHF-UCL"/>
</dbReference>
<dbReference type="GO" id="GO:0032902">
    <property type="term" value="P:nerve growth factor production"/>
    <property type="evidence" value="ECO:0000314"/>
    <property type="project" value="BHF-UCL"/>
</dbReference>
<dbReference type="GO" id="GO:0016486">
    <property type="term" value="P:peptide hormone processing"/>
    <property type="evidence" value="ECO:0000314"/>
    <property type="project" value="BHF-UCL"/>
</dbReference>
<dbReference type="GO" id="GO:0034369">
    <property type="term" value="P:plasma lipoprotein particle remodeling"/>
    <property type="evidence" value="ECO:0000304"/>
    <property type="project" value="Reactome"/>
</dbReference>
<dbReference type="GO" id="GO:0016485">
    <property type="term" value="P:protein processing"/>
    <property type="evidence" value="ECO:0000314"/>
    <property type="project" value="BHF-UCL"/>
</dbReference>
<dbReference type="GO" id="GO:0030510">
    <property type="term" value="P:regulation of BMP signaling pathway"/>
    <property type="evidence" value="ECO:0000304"/>
    <property type="project" value="BHF-UCL"/>
</dbReference>
<dbReference type="GO" id="GO:0032940">
    <property type="term" value="P:secretion by cell"/>
    <property type="evidence" value="ECO:0000314"/>
    <property type="project" value="BHF-UCL"/>
</dbReference>
<dbReference type="GO" id="GO:0007354">
    <property type="term" value="P:zygotic determination of anterior/posterior axis, embryo"/>
    <property type="evidence" value="ECO:0007669"/>
    <property type="project" value="Ensembl"/>
</dbReference>
<dbReference type="CDD" id="cd00064">
    <property type="entry name" value="FU"/>
    <property type="match status" value="4"/>
</dbReference>
<dbReference type="CDD" id="cd04059">
    <property type="entry name" value="Peptidases_S8_Protein_convertases_Kexins_Furin-like"/>
    <property type="match status" value="1"/>
</dbReference>
<dbReference type="FunFam" id="2.60.120.260:FF:000006">
    <property type="entry name" value="Proprotein convertase subtilisin/kexin type 5"/>
    <property type="match status" value="1"/>
</dbReference>
<dbReference type="FunFam" id="3.30.70.850:FF:000001">
    <property type="entry name" value="Proprotein convertase subtilisin/kexin type 5"/>
    <property type="match status" value="1"/>
</dbReference>
<dbReference type="FunFam" id="3.40.50.200:FF:000002">
    <property type="entry name" value="Proprotein convertase subtilisin/kexin type 5"/>
    <property type="match status" value="1"/>
</dbReference>
<dbReference type="FunFam" id="2.10.220.10:FF:000019">
    <property type="entry name" value="Proprotein convertase subtilisin/kexin type 6"/>
    <property type="match status" value="1"/>
</dbReference>
<dbReference type="FunFam" id="2.10.220.10:FF:000015">
    <property type="entry name" value="proprotein convertase subtilisin/kexin type 6"/>
    <property type="match status" value="1"/>
</dbReference>
<dbReference type="FunFam" id="2.10.220.10:FF:000021">
    <property type="entry name" value="proprotein convertase subtilisin/kexin type 6"/>
    <property type="match status" value="1"/>
</dbReference>
<dbReference type="Gene3D" id="2.60.120.260">
    <property type="entry name" value="Galactose-binding domain-like"/>
    <property type="match status" value="1"/>
</dbReference>
<dbReference type="Gene3D" id="2.10.220.10">
    <property type="entry name" value="Hormone Receptor, Insulin-like Growth Factor Receptor 1, Chain A, domain 2"/>
    <property type="match status" value="3"/>
</dbReference>
<dbReference type="Gene3D" id="3.30.70.850">
    <property type="entry name" value="Peptidase S8, pro-domain"/>
    <property type="match status" value="1"/>
</dbReference>
<dbReference type="Gene3D" id="3.40.50.200">
    <property type="entry name" value="Peptidase S8/S53 domain"/>
    <property type="match status" value="1"/>
</dbReference>
<dbReference type="InterPro" id="IPR000742">
    <property type="entry name" value="EGF-like_dom"/>
</dbReference>
<dbReference type="InterPro" id="IPR006212">
    <property type="entry name" value="Furin_repeat"/>
</dbReference>
<dbReference type="InterPro" id="IPR008979">
    <property type="entry name" value="Galactose-bd-like_sf"/>
</dbReference>
<dbReference type="InterPro" id="IPR032778">
    <property type="entry name" value="GF_recep_IV"/>
</dbReference>
<dbReference type="InterPro" id="IPR009030">
    <property type="entry name" value="Growth_fac_rcpt_cys_sf"/>
</dbReference>
<dbReference type="InterPro" id="IPR034182">
    <property type="entry name" value="Kexin/furin"/>
</dbReference>
<dbReference type="InterPro" id="IPR002884">
    <property type="entry name" value="P_dom"/>
</dbReference>
<dbReference type="InterPro" id="IPR000209">
    <property type="entry name" value="Peptidase_S8/S53_dom"/>
</dbReference>
<dbReference type="InterPro" id="IPR036852">
    <property type="entry name" value="Peptidase_S8/S53_dom_sf"/>
</dbReference>
<dbReference type="InterPro" id="IPR023827">
    <property type="entry name" value="Peptidase_S8_Asp-AS"/>
</dbReference>
<dbReference type="InterPro" id="IPR022398">
    <property type="entry name" value="Peptidase_S8_His-AS"/>
</dbReference>
<dbReference type="InterPro" id="IPR023828">
    <property type="entry name" value="Peptidase_S8_Ser-AS"/>
</dbReference>
<dbReference type="InterPro" id="IPR015500">
    <property type="entry name" value="Peptidase_S8_subtilisin-rel"/>
</dbReference>
<dbReference type="InterPro" id="IPR010909">
    <property type="entry name" value="PLAC"/>
</dbReference>
<dbReference type="InterPro" id="IPR032815">
    <property type="entry name" value="S8_pro-domain"/>
</dbReference>
<dbReference type="InterPro" id="IPR038466">
    <property type="entry name" value="S8_pro-domain_sf"/>
</dbReference>
<dbReference type="PANTHER" id="PTHR42884">
    <property type="entry name" value="PROPROTEIN CONVERTASE SUBTILISIN/KEXIN-RELATED"/>
    <property type="match status" value="1"/>
</dbReference>
<dbReference type="PANTHER" id="PTHR42884:SF8">
    <property type="entry name" value="PROPROTEIN CONVERTASE SUBTILISIN_KEXIN TYPE 6"/>
    <property type="match status" value="1"/>
</dbReference>
<dbReference type="Pfam" id="PF14843">
    <property type="entry name" value="GF_recep_IV"/>
    <property type="match status" value="1"/>
</dbReference>
<dbReference type="Pfam" id="PF01483">
    <property type="entry name" value="P_proprotein"/>
    <property type="match status" value="1"/>
</dbReference>
<dbReference type="Pfam" id="PF00082">
    <property type="entry name" value="Peptidase_S8"/>
    <property type="match status" value="1"/>
</dbReference>
<dbReference type="Pfam" id="PF16470">
    <property type="entry name" value="S8_pro-domain"/>
    <property type="match status" value="1"/>
</dbReference>
<dbReference type="PRINTS" id="PR00723">
    <property type="entry name" value="SUBTILISIN"/>
</dbReference>
<dbReference type="SMART" id="SM00181">
    <property type="entry name" value="EGF"/>
    <property type="match status" value="5"/>
</dbReference>
<dbReference type="SMART" id="SM00261">
    <property type="entry name" value="FU"/>
    <property type="match status" value="5"/>
</dbReference>
<dbReference type="SUPFAM" id="SSF49785">
    <property type="entry name" value="Galactose-binding domain-like"/>
    <property type="match status" value="1"/>
</dbReference>
<dbReference type="SUPFAM" id="SSF57184">
    <property type="entry name" value="Growth factor receptor domain"/>
    <property type="match status" value="2"/>
</dbReference>
<dbReference type="SUPFAM" id="SSF54897">
    <property type="entry name" value="Protease propeptides/inhibitors"/>
    <property type="match status" value="1"/>
</dbReference>
<dbReference type="SUPFAM" id="SSF52743">
    <property type="entry name" value="Subtilisin-like"/>
    <property type="match status" value="1"/>
</dbReference>
<dbReference type="PROSITE" id="PS51829">
    <property type="entry name" value="P_HOMO_B"/>
    <property type="match status" value="1"/>
</dbReference>
<dbReference type="PROSITE" id="PS50900">
    <property type="entry name" value="PLAC"/>
    <property type="match status" value="1"/>
</dbReference>
<dbReference type="PROSITE" id="PS51892">
    <property type="entry name" value="SUBTILASE"/>
    <property type="match status" value="1"/>
</dbReference>
<dbReference type="PROSITE" id="PS00136">
    <property type="entry name" value="SUBTILASE_ASP"/>
    <property type="match status" value="1"/>
</dbReference>
<dbReference type="PROSITE" id="PS00137">
    <property type="entry name" value="SUBTILASE_HIS"/>
    <property type="match status" value="1"/>
</dbReference>
<dbReference type="PROSITE" id="PS00138">
    <property type="entry name" value="SUBTILASE_SER"/>
    <property type="match status" value="1"/>
</dbReference>
<name>PCSK6_HUMAN</name>
<accession>P29122</accession>
<accession>Q15099</accession>
<accession>Q15100</accession>
<accession>Q9UEG7</accession>
<accession>Q9UEJ1</accession>
<accession>Q9UEJ2</accession>
<accession>Q9UEJ7</accession>
<accession>Q9UEJ8</accession>
<accession>Q9UEJ9</accession>
<accession>Q9Y4G9</accession>
<accession>Q9Y4H0</accession>
<accession>Q9Y4H1</accession>